<proteinExistence type="inferred from homology"/>
<feature type="chain" id="PRO_1000118310" description="Heat-inducible transcription repressor HrcA">
    <location>
        <begin position="1"/>
        <end position="337"/>
    </location>
</feature>
<sequence>MLDSRARLLLKALVERYIADGQPVGSRTLSKASGLELSPATIRNVMSDLEDLGLIVSPHTSAGRIPTARGYRLFVDTMLTTQRDPFSVAGQMARIAPDQPLKVISNAAHMLSSLSQFVGVVMAPRRTSVFRHIEFLRLSEKRFLVIIVSPDGDVQNRVIFTETDYTASQLIEASNFLNSHYAGMAIEEVRERLKNEVEALRGEIATLMQEAVLVSSEAIESRDEVVVSGERNLLAVSDFSSDMGNLRKLFDLFEQKAQLMRLLDVSSRAEGVRIYIGGESQVIPYQELSVVTAPYEVDGQVVGTLGVIGPMRMPYEKMIQIVDITSKLVSTALSHSK</sequence>
<keyword id="KW-1185">Reference proteome</keyword>
<keyword id="KW-0678">Repressor</keyword>
<keyword id="KW-0346">Stress response</keyword>
<keyword id="KW-0804">Transcription</keyword>
<keyword id="KW-0805">Transcription regulation</keyword>
<organism>
    <name type="scientific">Polaromonas naphthalenivorans (strain CJ2)</name>
    <dbReference type="NCBI Taxonomy" id="365044"/>
    <lineage>
        <taxon>Bacteria</taxon>
        <taxon>Pseudomonadati</taxon>
        <taxon>Pseudomonadota</taxon>
        <taxon>Betaproteobacteria</taxon>
        <taxon>Burkholderiales</taxon>
        <taxon>Comamonadaceae</taxon>
        <taxon>Polaromonas</taxon>
    </lineage>
</organism>
<accession>A1VKP8</accession>
<name>HRCA_POLNA</name>
<gene>
    <name evidence="1" type="primary">hrcA</name>
    <name type="ordered locus">Pnap_0909</name>
</gene>
<protein>
    <recommendedName>
        <fullName evidence="1">Heat-inducible transcription repressor HrcA</fullName>
    </recommendedName>
</protein>
<dbReference type="EMBL" id="CP000529">
    <property type="protein sequence ID" value="ABM36226.1"/>
    <property type="molecule type" value="Genomic_DNA"/>
</dbReference>
<dbReference type="RefSeq" id="WP_011800320.1">
    <property type="nucleotide sequence ID" value="NC_008781.1"/>
</dbReference>
<dbReference type="SMR" id="A1VKP8"/>
<dbReference type="STRING" id="365044.Pnap_0909"/>
<dbReference type="KEGG" id="pna:Pnap_0909"/>
<dbReference type="eggNOG" id="COG1420">
    <property type="taxonomic scope" value="Bacteria"/>
</dbReference>
<dbReference type="HOGENOM" id="CLU_050019_0_0_4"/>
<dbReference type="OrthoDB" id="9783139at2"/>
<dbReference type="Proteomes" id="UP000000644">
    <property type="component" value="Chromosome"/>
</dbReference>
<dbReference type="GO" id="GO:0003677">
    <property type="term" value="F:DNA binding"/>
    <property type="evidence" value="ECO:0007669"/>
    <property type="project" value="InterPro"/>
</dbReference>
<dbReference type="GO" id="GO:0045892">
    <property type="term" value="P:negative regulation of DNA-templated transcription"/>
    <property type="evidence" value="ECO:0007669"/>
    <property type="project" value="UniProtKB-UniRule"/>
</dbReference>
<dbReference type="Gene3D" id="3.30.450.40">
    <property type="match status" value="1"/>
</dbReference>
<dbReference type="Gene3D" id="3.30.390.60">
    <property type="entry name" value="Heat-inducible transcription repressor hrca homolog, domain 3"/>
    <property type="match status" value="1"/>
</dbReference>
<dbReference type="Gene3D" id="1.10.10.10">
    <property type="entry name" value="Winged helix-like DNA-binding domain superfamily/Winged helix DNA-binding domain"/>
    <property type="match status" value="1"/>
</dbReference>
<dbReference type="HAMAP" id="MF_00081">
    <property type="entry name" value="HrcA"/>
    <property type="match status" value="1"/>
</dbReference>
<dbReference type="InterPro" id="IPR029016">
    <property type="entry name" value="GAF-like_dom_sf"/>
</dbReference>
<dbReference type="InterPro" id="IPR002571">
    <property type="entry name" value="HrcA"/>
</dbReference>
<dbReference type="InterPro" id="IPR021153">
    <property type="entry name" value="HrcA_C"/>
</dbReference>
<dbReference type="InterPro" id="IPR036388">
    <property type="entry name" value="WH-like_DNA-bd_sf"/>
</dbReference>
<dbReference type="InterPro" id="IPR036390">
    <property type="entry name" value="WH_DNA-bd_sf"/>
</dbReference>
<dbReference type="InterPro" id="IPR005104">
    <property type="entry name" value="WHTH_HrcA_DNA-bd"/>
</dbReference>
<dbReference type="InterPro" id="IPR023120">
    <property type="entry name" value="WHTH_transcript_rep_HrcA_IDD"/>
</dbReference>
<dbReference type="NCBIfam" id="TIGR00331">
    <property type="entry name" value="hrcA"/>
    <property type="match status" value="1"/>
</dbReference>
<dbReference type="PANTHER" id="PTHR34824">
    <property type="entry name" value="HEAT-INDUCIBLE TRANSCRIPTION REPRESSOR HRCA"/>
    <property type="match status" value="1"/>
</dbReference>
<dbReference type="PANTHER" id="PTHR34824:SF1">
    <property type="entry name" value="HEAT-INDUCIBLE TRANSCRIPTION REPRESSOR HRCA"/>
    <property type="match status" value="1"/>
</dbReference>
<dbReference type="Pfam" id="PF01628">
    <property type="entry name" value="HrcA"/>
    <property type="match status" value="1"/>
</dbReference>
<dbReference type="Pfam" id="PF03444">
    <property type="entry name" value="HrcA_DNA-bdg"/>
    <property type="match status" value="1"/>
</dbReference>
<dbReference type="PIRSF" id="PIRSF005485">
    <property type="entry name" value="HrcA"/>
    <property type="match status" value="1"/>
</dbReference>
<dbReference type="SUPFAM" id="SSF55781">
    <property type="entry name" value="GAF domain-like"/>
    <property type="match status" value="1"/>
</dbReference>
<dbReference type="SUPFAM" id="SSF46785">
    <property type="entry name" value="Winged helix' DNA-binding domain"/>
    <property type="match status" value="1"/>
</dbReference>
<evidence type="ECO:0000255" key="1">
    <source>
        <dbReference type="HAMAP-Rule" id="MF_00081"/>
    </source>
</evidence>
<comment type="function">
    <text evidence="1">Negative regulator of class I heat shock genes (grpE-dnaK-dnaJ and groELS operons). Prevents heat-shock induction of these operons.</text>
</comment>
<comment type="similarity">
    <text evidence="1">Belongs to the HrcA family.</text>
</comment>
<reference key="1">
    <citation type="journal article" date="2009" name="Environ. Microbiol.">
        <title>The genome of Polaromonas naphthalenivorans strain CJ2, isolated from coal tar-contaminated sediment, reveals physiological and metabolic versatility and evolution through extensive horizontal gene transfer.</title>
        <authorList>
            <person name="Yagi J.M."/>
            <person name="Sims D."/>
            <person name="Brettin T."/>
            <person name="Bruce D."/>
            <person name="Madsen E.L."/>
        </authorList>
    </citation>
    <scope>NUCLEOTIDE SEQUENCE [LARGE SCALE GENOMIC DNA]</scope>
    <source>
        <strain>CJ2</strain>
    </source>
</reference>